<feature type="chain" id="PRO_1000068079" description="Large ribosomal subunit protein uL23">
    <location>
        <begin position="1"/>
        <end position="99"/>
    </location>
</feature>
<reference key="1">
    <citation type="journal article" date="2007" name="Genome Biol.">
        <title>Comparison of Francisella tularensis genomes reveals evolutionary events associated with the emergence of human pathogenic strains.</title>
        <authorList>
            <person name="Rohmer L."/>
            <person name="Fong C."/>
            <person name="Abmayr S."/>
            <person name="Wasnick M."/>
            <person name="Larson Freeman T.J."/>
            <person name="Radey M."/>
            <person name="Guina T."/>
            <person name="Svensson K."/>
            <person name="Hayden H.S."/>
            <person name="Jacobs M."/>
            <person name="Gallagher L.A."/>
            <person name="Manoil C."/>
            <person name="Ernst R.K."/>
            <person name="Drees B."/>
            <person name="Buckley D."/>
            <person name="Haugen E."/>
            <person name="Bovee D."/>
            <person name="Zhou Y."/>
            <person name="Chang J."/>
            <person name="Levy R."/>
            <person name="Lim R."/>
            <person name="Gillett W."/>
            <person name="Guenthener D."/>
            <person name="Kang A."/>
            <person name="Shaffer S.A."/>
            <person name="Taylor G."/>
            <person name="Chen J."/>
            <person name="Gallis B."/>
            <person name="D'Argenio D.A."/>
            <person name="Forsman M."/>
            <person name="Olson M.V."/>
            <person name="Goodlett D.R."/>
            <person name="Kaul R."/>
            <person name="Miller S.I."/>
            <person name="Brittnacher M.J."/>
        </authorList>
    </citation>
    <scope>NUCLEOTIDE SEQUENCE [LARGE SCALE GENOMIC DNA]</scope>
    <source>
        <strain>U112</strain>
    </source>
</reference>
<proteinExistence type="inferred from homology"/>
<comment type="function">
    <text evidence="1">One of the early assembly proteins it binds 23S rRNA. One of the proteins that surrounds the polypeptide exit tunnel on the outside of the ribosome. Forms the main docking site for trigger factor binding to the ribosome.</text>
</comment>
<comment type="subunit">
    <text evidence="1">Part of the 50S ribosomal subunit. Contacts protein L29, and trigger factor when it is bound to the ribosome.</text>
</comment>
<comment type="similarity">
    <text evidence="1">Belongs to the universal ribosomal protein uL23 family.</text>
</comment>
<dbReference type="EMBL" id="CP000439">
    <property type="protein sequence ID" value="ABK89150.1"/>
    <property type="molecule type" value="Genomic_DNA"/>
</dbReference>
<dbReference type="RefSeq" id="WP_003027200.1">
    <property type="nucleotide sequence ID" value="NZ_CP009633.1"/>
</dbReference>
<dbReference type="SMR" id="A0Q4I5"/>
<dbReference type="GeneID" id="75264259"/>
<dbReference type="KEGG" id="ftn:FTN_0241"/>
<dbReference type="KEGG" id="ftx:AW25_1801"/>
<dbReference type="BioCyc" id="FTUL401614:G1G75-252-MONOMER"/>
<dbReference type="Proteomes" id="UP000000762">
    <property type="component" value="Chromosome"/>
</dbReference>
<dbReference type="GO" id="GO:1990904">
    <property type="term" value="C:ribonucleoprotein complex"/>
    <property type="evidence" value="ECO:0007669"/>
    <property type="project" value="UniProtKB-KW"/>
</dbReference>
<dbReference type="GO" id="GO:0005840">
    <property type="term" value="C:ribosome"/>
    <property type="evidence" value="ECO:0007669"/>
    <property type="project" value="UniProtKB-KW"/>
</dbReference>
<dbReference type="GO" id="GO:0019843">
    <property type="term" value="F:rRNA binding"/>
    <property type="evidence" value="ECO:0007669"/>
    <property type="project" value="UniProtKB-UniRule"/>
</dbReference>
<dbReference type="GO" id="GO:0003735">
    <property type="term" value="F:structural constituent of ribosome"/>
    <property type="evidence" value="ECO:0007669"/>
    <property type="project" value="InterPro"/>
</dbReference>
<dbReference type="GO" id="GO:0006412">
    <property type="term" value="P:translation"/>
    <property type="evidence" value="ECO:0007669"/>
    <property type="project" value="UniProtKB-UniRule"/>
</dbReference>
<dbReference type="FunFam" id="3.30.70.330:FF:000001">
    <property type="entry name" value="50S ribosomal protein L23"/>
    <property type="match status" value="1"/>
</dbReference>
<dbReference type="Gene3D" id="3.30.70.330">
    <property type="match status" value="1"/>
</dbReference>
<dbReference type="HAMAP" id="MF_01369_B">
    <property type="entry name" value="Ribosomal_uL23_B"/>
    <property type="match status" value="1"/>
</dbReference>
<dbReference type="InterPro" id="IPR012677">
    <property type="entry name" value="Nucleotide-bd_a/b_plait_sf"/>
</dbReference>
<dbReference type="InterPro" id="IPR013025">
    <property type="entry name" value="Ribosomal_uL23-like"/>
</dbReference>
<dbReference type="InterPro" id="IPR012678">
    <property type="entry name" value="Ribosomal_uL23/eL15/eS24_sf"/>
</dbReference>
<dbReference type="InterPro" id="IPR001014">
    <property type="entry name" value="Ribosomal_uL23_CS"/>
</dbReference>
<dbReference type="NCBIfam" id="NF004359">
    <property type="entry name" value="PRK05738.1-3"/>
    <property type="match status" value="1"/>
</dbReference>
<dbReference type="NCBIfam" id="NF004363">
    <property type="entry name" value="PRK05738.2-4"/>
    <property type="match status" value="1"/>
</dbReference>
<dbReference type="PANTHER" id="PTHR11620">
    <property type="entry name" value="60S RIBOSOMAL PROTEIN L23A"/>
    <property type="match status" value="1"/>
</dbReference>
<dbReference type="Pfam" id="PF00276">
    <property type="entry name" value="Ribosomal_L23"/>
    <property type="match status" value="1"/>
</dbReference>
<dbReference type="SUPFAM" id="SSF54189">
    <property type="entry name" value="Ribosomal proteins S24e, L23 and L15e"/>
    <property type="match status" value="1"/>
</dbReference>
<dbReference type="PROSITE" id="PS00050">
    <property type="entry name" value="RIBOSOMAL_L23"/>
    <property type="match status" value="1"/>
</dbReference>
<gene>
    <name evidence="1" type="primary">rplW</name>
    <name type="ordered locus">FTN_0241</name>
</gene>
<sequence length="99" mass="11136">MSSQEKLLKTVIRPHVSDKTYGLSDANSTIVFEVARFANKQDVKNAVEKLFEVKVESVNILNVKGKARRFGRVEGRTKAWKKAYVKLAEGHDINFVGAE</sequence>
<protein>
    <recommendedName>
        <fullName evidence="1">Large ribosomal subunit protein uL23</fullName>
    </recommendedName>
    <alternativeName>
        <fullName evidence="2">50S ribosomal protein L23</fullName>
    </alternativeName>
</protein>
<evidence type="ECO:0000255" key="1">
    <source>
        <dbReference type="HAMAP-Rule" id="MF_01369"/>
    </source>
</evidence>
<evidence type="ECO:0000305" key="2"/>
<organism>
    <name type="scientific">Francisella tularensis subsp. novicida (strain U112)</name>
    <dbReference type="NCBI Taxonomy" id="401614"/>
    <lineage>
        <taxon>Bacteria</taxon>
        <taxon>Pseudomonadati</taxon>
        <taxon>Pseudomonadota</taxon>
        <taxon>Gammaproteobacteria</taxon>
        <taxon>Thiotrichales</taxon>
        <taxon>Francisellaceae</taxon>
        <taxon>Francisella</taxon>
    </lineage>
</organism>
<accession>A0Q4I5</accession>
<name>RL23_FRATN</name>
<keyword id="KW-0687">Ribonucleoprotein</keyword>
<keyword id="KW-0689">Ribosomal protein</keyword>
<keyword id="KW-0694">RNA-binding</keyword>
<keyword id="KW-0699">rRNA-binding</keyword>